<sequence>MKVRASVKKICRNCKIVKRSGVVRVICVEPKHKQRQG</sequence>
<organism>
    <name type="scientific">Shewanella loihica (strain ATCC BAA-1088 / PV-4)</name>
    <dbReference type="NCBI Taxonomy" id="323850"/>
    <lineage>
        <taxon>Bacteria</taxon>
        <taxon>Pseudomonadati</taxon>
        <taxon>Pseudomonadota</taxon>
        <taxon>Gammaproteobacteria</taxon>
        <taxon>Alteromonadales</taxon>
        <taxon>Shewanellaceae</taxon>
        <taxon>Shewanella</taxon>
    </lineage>
</organism>
<proteinExistence type="inferred from homology"/>
<reference key="1">
    <citation type="submission" date="2007-03" db="EMBL/GenBank/DDBJ databases">
        <title>Complete sequence of Shewanella loihica PV-4.</title>
        <authorList>
            <consortium name="US DOE Joint Genome Institute"/>
            <person name="Copeland A."/>
            <person name="Lucas S."/>
            <person name="Lapidus A."/>
            <person name="Barry K."/>
            <person name="Detter J.C."/>
            <person name="Glavina del Rio T."/>
            <person name="Hammon N."/>
            <person name="Israni S."/>
            <person name="Dalin E."/>
            <person name="Tice H."/>
            <person name="Pitluck S."/>
            <person name="Chain P."/>
            <person name="Malfatti S."/>
            <person name="Shin M."/>
            <person name="Vergez L."/>
            <person name="Schmutz J."/>
            <person name="Larimer F."/>
            <person name="Land M."/>
            <person name="Hauser L."/>
            <person name="Kyrpides N."/>
            <person name="Mikhailova N."/>
            <person name="Romine M.F."/>
            <person name="Serres G."/>
            <person name="Fredrickson J."/>
            <person name="Tiedje J."/>
            <person name="Richardson P."/>
        </authorList>
    </citation>
    <scope>NUCLEOTIDE SEQUENCE [LARGE SCALE GENOMIC DNA]</scope>
    <source>
        <strain>ATCC BAA-1088 / PV-4</strain>
    </source>
</reference>
<dbReference type="EMBL" id="CP000606">
    <property type="protein sequence ID" value="ABO22051.1"/>
    <property type="molecule type" value="Genomic_DNA"/>
</dbReference>
<dbReference type="RefSeq" id="WP_006083579.1">
    <property type="nucleotide sequence ID" value="NC_009092.1"/>
</dbReference>
<dbReference type="SMR" id="A3Q9A3"/>
<dbReference type="STRING" id="323850.Shew_0179"/>
<dbReference type="GeneID" id="94726207"/>
<dbReference type="KEGG" id="slo:Shew_0179"/>
<dbReference type="eggNOG" id="COG0257">
    <property type="taxonomic scope" value="Bacteria"/>
</dbReference>
<dbReference type="HOGENOM" id="CLU_135723_6_2_6"/>
<dbReference type="OrthoDB" id="9802520at2"/>
<dbReference type="Proteomes" id="UP000001558">
    <property type="component" value="Chromosome"/>
</dbReference>
<dbReference type="GO" id="GO:0005737">
    <property type="term" value="C:cytoplasm"/>
    <property type="evidence" value="ECO:0007669"/>
    <property type="project" value="UniProtKB-ARBA"/>
</dbReference>
<dbReference type="GO" id="GO:1990904">
    <property type="term" value="C:ribonucleoprotein complex"/>
    <property type="evidence" value="ECO:0007669"/>
    <property type="project" value="UniProtKB-KW"/>
</dbReference>
<dbReference type="GO" id="GO:0005840">
    <property type="term" value="C:ribosome"/>
    <property type="evidence" value="ECO:0007669"/>
    <property type="project" value="UniProtKB-KW"/>
</dbReference>
<dbReference type="GO" id="GO:0003735">
    <property type="term" value="F:structural constituent of ribosome"/>
    <property type="evidence" value="ECO:0007669"/>
    <property type="project" value="InterPro"/>
</dbReference>
<dbReference type="GO" id="GO:0006412">
    <property type="term" value="P:translation"/>
    <property type="evidence" value="ECO:0007669"/>
    <property type="project" value="UniProtKB-UniRule"/>
</dbReference>
<dbReference type="HAMAP" id="MF_00251">
    <property type="entry name" value="Ribosomal_bL36"/>
    <property type="match status" value="1"/>
</dbReference>
<dbReference type="InterPro" id="IPR000473">
    <property type="entry name" value="Ribosomal_bL36"/>
</dbReference>
<dbReference type="InterPro" id="IPR035977">
    <property type="entry name" value="Ribosomal_bL36_sp"/>
</dbReference>
<dbReference type="NCBIfam" id="TIGR01022">
    <property type="entry name" value="rpmJ_bact"/>
    <property type="match status" value="1"/>
</dbReference>
<dbReference type="PANTHER" id="PTHR42888">
    <property type="entry name" value="50S RIBOSOMAL PROTEIN L36, CHLOROPLASTIC"/>
    <property type="match status" value="1"/>
</dbReference>
<dbReference type="PANTHER" id="PTHR42888:SF1">
    <property type="entry name" value="LARGE RIBOSOMAL SUBUNIT PROTEIN BL36C"/>
    <property type="match status" value="1"/>
</dbReference>
<dbReference type="Pfam" id="PF00444">
    <property type="entry name" value="Ribosomal_L36"/>
    <property type="match status" value="1"/>
</dbReference>
<dbReference type="SUPFAM" id="SSF57840">
    <property type="entry name" value="Ribosomal protein L36"/>
    <property type="match status" value="1"/>
</dbReference>
<dbReference type="PROSITE" id="PS00828">
    <property type="entry name" value="RIBOSOMAL_L36"/>
    <property type="match status" value="1"/>
</dbReference>
<gene>
    <name evidence="1" type="primary">rpmJ</name>
    <name type="ordered locus">Shew_0179</name>
</gene>
<name>RL36_SHELP</name>
<feature type="chain" id="PRO_0000302291" description="Large ribosomal subunit protein bL36">
    <location>
        <begin position="1"/>
        <end position="37"/>
    </location>
</feature>
<protein>
    <recommendedName>
        <fullName evidence="1">Large ribosomal subunit protein bL36</fullName>
    </recommendedName>
    <alternativeName>
        <fullName evidence="2">50S ribosomal protein L36</fullName>
    </alternativeName>
</protein>
<accession>A3Q9A3</accession>
<comment type="similarity">
    <text evidence="1">Belongs to the bacterial ribosomal protein bL36 family.</text>
</comment>
<evidence type="ECO:0000255" key="1">
    <source>
        <dbReference type="HAMAP-Rule" id="MF_00251"/>
    </source>
</evidence>
<evidence type="ECO:0000305" key="2"/>
<keyword id="KW-1185">Reference proteome</keyword>
<keyword id="KW-0687">Ribonucleoprotein</keyword>
<keyword id="KW-0689">Ribosomal protein</keyword>